<sequence length="218" mass="25545">MSDNDELQQIAHLRREYTKGGLRRRDLPADPLTLFERWLSQACEAKLADPTAMVVATVDEHGQPYQRIVLLKHYDEKGMVFYTNLGSRKAHQIENNPRVSLLFPWHTLERQVMVIGKAERLSTLEVMKYFHSRPRDSQIGAWVSKQSSRISARGILESKFLELKQKFQQGEVPLPSFWGGFRVSLEQIEFWQGGEHRLHDRFLYQRENDAWKIDRLAP</sequence>
<dbReference type="EC" id="1.4.3.5" evidence="1"/>
<dbReference type="EMBL" id="CP001396">
    <property type="protein sequence ID" value="ACR65349.1"/>
    <property type="molecule type" value="Genomic_DNA"/>
</dbReference>
<dbReference type="RefSeq" id="WP_001282319.1">
    <property type="nucleotide sequence ID" value="NC_012759.1"/>
</dbReference>
<dbReference type="SMR" id="C4ZYA1"/>
<dbReference type="GeneID" id="75171699"/>
<dbReference type="KEGG" id="ebw:BWG_1453"/>
<dbReference type="HOGENOM" id="CLU_032263_2_2_6"/>
<dbReference type="UniPathway" id="UPA01068">
    <property type="reaction ID" value="UER00304"/>
</dbReference>
<dbReference type="UniPathway" id="UPA01068">
    <property type="reaction ID" value="UER00305"/>
</dbReference>
<dbReference type="GO" id="GO:0010181">
    <property type="term" value="F:FMN binding"/>
    <property type="evidence" value="ECO:0007669"/>
    <property type="project" value="UniProtKB-UniRule"/>
</dbReference>
<dbReference type="GO" id="GO:0004733">
    <property type="term" value="F:pyridoxamine phosphate oxidase activity"/>
    <property type="evidence" value="ECO:0007669"/>
    <property type="project" value="UniProtKB-UniRule"/>
</dbReference>
<dbReference type="GO" id="GO:0008615">
    <property type="term" value="P:pyridoxine biosynthetic process"/>
    <property type="evidence" value="ECO:0007669"/>
    <property type="project" value="UniProtKB-KW"/>
</dbReference>
<dbReference type="FunFam" id="2.30.110.10:FF:000001">
    <property type="entry name" value="Pyridoxine/pyridoxamine 5'-phosphate oxidase"/>
    <property type="match status" value="1"/>
</dbReference>
<dbReference type="Gene3D" id="2.30.110.10">
    <property type="entry name" value="Electron Transport, Fmn-binding Protein, Chain A"/>
    <property type="match status" value="1"/>
</dbReference>
<dbReference type="HAMAP" id="MF_01629">
    <property type="entry name" value="PdxH"/>
    <property type="match status" value="1"/>
</dbReference>
<dbReference type="InterPro" id="IPR000659">
    <property type="entry name" value="Pyridox_Oxase"/>
</dbReference>
<dbReference type="InterPro" id="IPR019740">
    <property type="entry name" value="Pyridox_Oxase_CS"/>
</dbReference>
<dbReference type="InterPro" id="IPR011576">
    <property type="entry name" value="Pyridox_Oxase_N"/>
</dbReference>
<dbReference type="InterPro" id="IPR019576">
    <property type="entry name" value="Pyridoxamine_oxidase_dimer_C"/>
</dbReference>
<dbReference type="InterPro" id="IPR012349">
    <property type="entry name" value="Split_barrel_FMN-bd"/>
</dbReference>
<dbReference type="NCBIfam" id="TIGR00558">
    <property type="entry name" value="pdxH"/>
    <property type="match status" value="1"/>
</dbReference>
<dbReference type="NCBIfam" id="NF004231">
    <property type="entry name" value="PRK05679.1"/>
    <property type="match status" value="1"/>
</dbReference>
<dbReference type="PANTHER" id="PTHR10851:SF0">
    <property type="entry name" value="PYRIDOXINE-5'-PHOSPHATE OXIDASE"/>
    <property type="match status" value="1"/>
</dbReference>
<dbReference type="PANTHER" id="PTHR10851">
    <property type="entry name" value="PYRIDOXINE-5-PHOSPHATE OXIDASE"/>
    <property type="match status" value="1"/>
</dbReference>
<dbReference type="Pfam" id="PF10590">
    <property type="entry name" value="PNP_phzG_C"/>
    <property type="match status" value="1"/>
</dbReference>
<dbReference type="Pfam" id="PF01243">
    <property type="entry name" value="PNPOx_N"/>
    <property type="match status" value="1"/>
</dbReference>
<dbReference type="PIRSF" id="PIRSF000190">
    <property type="entry name" value="Pyd_amn-ph_oxd"/>
    <property type="match status" value="1"/>
</dbReference>
<dbReference type="SUPFAM" id="SSF50475">
    <property type="entry name" value="FMN-binding split barrel"/>
    <property type="match status" value="1"/>
</dbReference>
<dbReference type="PROSITE" id="PS01064">
    <property type="entry name" value="PYRIDOX_OXIDASE"/>
    <property type="match status" value="1"/>
</dbReference>
<comment type="function">
    <text evidence="1">Catalyzes the oxidation of either pyridoxine 5'-phosphate (PNP) or pyridoxamine 5'-phosphate (PMP) into pyridoxal 5'-phosphate (PLP).</text>
</comment>
<comment type="catalytic activity">
    <reaction evidence="1">
        <text>pyridoxamine 5'-phosphate + O2 + H2O = pyridoxal 5'-phosphate + H2O2 + NH4(+)</text>
        <dbReference type="Rhea" id="RHEA:15817"/>
        <dbReference type="ChEBI" id="CHEBI:15377"/>
        <dbReference type="ChEBI" id="CHEBI:15379"/>
        <dbReference type="ChEBI" id="CHEBI:16240"/>
        <dbReference type="ChEBI" id="CHEBI:28938"/>
        <dbReference type="ChEBI" id="CHEBI:58451"/>
        <dbReference type="ChEBI" id="CHEBI:597326"/>
        <dbReference type="EC" id="1.4.3.5"/>
    </reaction>
</comment>
<comment type="catalytic activity">
    <reaction evidence="1">
        <text>pyridoxine 5'-phosphate + O2 = pyridoxal 5'-phosphate + H2O2</text>
        <dbReference type="Rhea" id="RHEA:15149"/>
        <dbReference type="ChEBI" id="CHEBI:15379"/>
        <dbReference type="ChEBI" id="CHEBI:16240"/>
        <dbReference type="ChEBI" id="CHEBI:58589"/>
        <dbReference type="ChEBI" id="CHEBI:597326"/>
        <dbReference type="EC" id="1.4.3.5"/>
    </reaction>
</comment>
<comment type="cofactor">
    <cofactor evidence="1">
        <name>FMN</name>
        <dbReference type="ChEBI" id="CHEBI:58210"/>
    </cofactor>
    <text evidence="1">Binds 1 FMN per subunit.</text>
</comment>
<comment type="pathway">
    <text evidence="1">Cofactor metabolism; pyridoxal 5'-phosphate salvage; pyridoxal 5'-phosphate from pyridoxamine 5'-phosphate: step 1/1.</text>
</comment>
<comment type="pathway">
    <text evidence="1">Cofactor metabolism; pyridoxal 5'-phosphate salvage; pyridoxal 5'-phosphate from pyridoxine 5'-phosphate: step 1/1.</text>
</comment>
<comment type="subunit">
    <text evidence="1">Homodimer.</text>
</comment>
<comment type="similarity">
    <text evidence="1">Belongs to the pyridoxamine 5'-phosphate oxidase family.</text>
</comment>
<reference key="1">
    <citation type="journal article" date="2009" name="J. Bacteriol.">
        <title>Genomic sequencing reveals regulatory mutations and recombinational events in the widely used MC4100 lineage of Escherichia coli K-12.</title>
        <authorList>
            <person name="Ferenci T."/>
            <person name="Zhou Z."/>
            <person name="Betteridge T."/>
            <person name="Ren Y."/>
            <person name="Liu Y."/>
            <person name="Feng L."/>
            <person name="Reeves P.R."/>
            <person name="Wang L."/>
        </authorList>
    </citation>
    <scope>NUCLEOTIDE SEQUENCE [LARGE SCALE GENOMIC DNA]</scope>
    <source>
        <strain>K12 / MC4100 / BW2952</strain>
    </source>
</reference>
<protein>
    <recommendedName>
        <fullName evidence="1">Pyridoxine/pyridoxamine 5'-phosphate oxidase</fullName>
        <ecNumber evidence="1">1.4.3.5</ecNumber>
    </recommendedName>
    <alternativeName>
        <fullName evidence="1">PNP/PMP oxidase</fullName>
        <shortName evidence="1">PNPOx</shortName>
    </alternativeName>
    <alternativeName>
        <fullName evidence="1">Pyridoxal 5'-phosphate synthase</fullName>
    </alternativeName>
</protein>
<proteinExistence type="inferred from homology"/>
<accession>C4ZYA1</accession>
<keyword id="KW-0285">Flavoprotein</keyword>
<keyword id="KW-0288">FMN</keyword>
<keyword id="KW-0560">Oxidoreductase</keyword>
<keyword id="KW-0664">Pyridoxine biosynthesis</keyword>
<evidence type="ECO:0000255" key="1">
    <source>
        <dbReference type="HAMAP-Rule" id="MF_01629"/>
    </source>
</evidence>
<name>PDXH_ECOBW</name>
<organism>
    <name type="scientific">Escherichia coli (strain K12 / MC4100 / BW2952)</name>
    <dbReference type="NCBI Taxonomy" id="595496"/>
    <lineage>
        <taxon>Bacteria</taxon>
        <taxon>Pseudomonadati</taxon>
        <taxon>Pseudomonadota</taxon>
        <taxon>Gammaproteobacteria</taxon>
        <taxon>Enterobacterales</taxon>
        <taxon>Enterobacteriaceae</taxon>
        <taxon>Escherichia</taxon>
    </lineage>
</organism>
<feature type="chain" id="PRO_1000215762" description="Pyridoxine/pyridoxamine 5'-phosphate oxidase">
    <location>
        <begin position="1"/>
        <end position="218"/>
    </location>
</feature>
<feature type="binding site" evidence="1">
    <location>
        <begin position="14"/>
        <end position="17"/>
    </location>
    <ligand>
        <name>substrate</name>
    </ligand>
</feature>
<feature type="binding site" evidence="1">
    <location>
        <begin position="67"/>
        <end position="72"/>
    </location>
    <ligand>
        <name>FMN</name>
        <dbReference type="ChEBI" id="CHEBI:58210"/>
    </ligand>
</feature>
<feature type="binding site" evidence="1">
    <location>
        <position position="72"/>
    </location>
    <ligand>
        <name>substrate</name>
    </ligand>
</feature>
<feature type="binding site" evidence="1">
    <location>
        <begin position="82"/>
        <end position="83"/>
    </location>
    <ligand>
        <name>FMN</name>
        <dbReference type="ChEBI" id="CHEBI:58210"/>
    </ligand>
</feature>
<feature type="binding site" evidence="1">
    <location>
        <position position="88"/>
    </location>
    <ligand>
        <name>FMN</name>
        <dbReference type="ChEBI" id="CHEBI:58210"/>
    </ligand>
</feature>
<feature type="binding site" evidence="1">
    <location>
        <position position="89"/>
    </location>
    <ligand>
        <name>FMN</name>
        <dbReference type="ChEBI" id="CHEBI:58210"/>
    </ligand>
</feature>
<feature type="binding site" evidence="1">
    <location>
        <position position="111"/>
    </location>
    <ligand>
        <name>FMN</name>
        <dbReference type="ChEBI" id="CHEBI:58210"/>
    </ligand>
</feature>
<feature type="binding site" evidence="1">
    <location>
        <position position="129"/>
    </location>
    <ligand>
        <name>substrate</name>
    </ligand>
</feature>
<feature type="binding site" evidence="1">
    <location>
        <position position="133"/>
    </location>
    <ligand>
        <name>substrate</name>
    </ligand>
</feature>
<feature type="binding site" evidence="1">
    <location>
        <position position="137"/>
    </location>
    <ligand>
        <name>substrate</name>
    </ligand>
</feature>
<feature type="binding site" evidence="1">
    <location>
        <begin position="146"/>
        <end position="147"/>
    </location>
    <ligand>
        <name>FMN</name>
        <dbReference type="ChEBI" id="CHEBI:58210"/>
    </ligand>
</feature>
<feature type="binding site" evidence="1">
    <location>
        <position position="191"/>
    </location>
    <ligand>
        <name>FMN</name>
        <dbReference type="ChEBI" id="CHEBI:58210"/>
    </ligand>
</feature>
<feature type="binding site" evidence="1">
    <location>
        <begin position="197"/>
        <end position="199"/>
    </location>
    <ligand>
        <name>substrate</name>
    </ligand>
</feature>
<feature type="binding site" evidence="1">
    <location>
        <position position="201"/>
    </location>
    <ligand>
        <name>FMN</name>
        <dbReference type="ChEBI" id="CHEBI:58210"/>
    </ligand>
</feature>
<gene>
    <name evidence="1" type="primary">pdxH</name>
    <name type="ordered locus">BWG_1453</name>
</gene>